<proteinExistence type="inferred from homology"/>
<gene>
    <name evidence="1" type="primary">rplE</name>
    <name type="ordered locus">RBAM_001530</name>
</gene>
<organism>
    <name type="scientific">Bacillus velezensis (strain DSM 23117 / BGSC 10A6 / LMG 26770 / FZB42)</name>
    <name type="common">Bacillus amyloliquefaciens subsp. plantarum</name>
    <dbReference type="NCBI Taxonomy" id="326423"/>
    <lineage>
        <taxon>Bacteria</taxon>
        <taxon>Bacillati</taxon>
        <taxon>Bacillota</taxon>
        <taxon>Bacilli</taxon>
        <taxon>Bacillales</taxon>
        <taxon>Bacillaceae</taxon>
        <taxon>Bacillus</taxon>
        <taxon>Bacillus amyloliquefaciens group</taxon>
    </lineage>
</organism>
<reference key="1">
    <citation type="journal article" date="2007" name="Nat. Biotechnol.">
        <title>Comparative analysis of the complete genome sequence of the plant growth-promoting bacterium Bacillus amyloliquefaciens FZB42.</title>
        <authorList>
            <person name="Chen X.H."/>
            <person name="Koumoutsi A."/>
            <person name="Scholz R."/>
            <person name="Eisenreich A."/>
            <person name="Schneider K."/>
            <person name="Heinemeyer I."/>
            <person name="Morgenstern B."/>
            <person name="Voss B."/>
            <person name="Hess W.R."/>
            <person name="Reva O."/>
            <person name="Junge H."/>
            <person name="Voigt B."/>
            <person name="Jungblut P.R."/>
            <person name="Vater J."/>
            <person name="Suessmuth R."/>
            <person name="Liesegang H."/>
            <person name="Strittmatter A."/>
            <person name="Gottschalk G."/>
            <person name="Borriss R."/>
        </authorList>
    </citation>
    <scope>NUCLEOTIDE SEQUENCE [LARGE SCALE GENOMIC DNA]</scope>
    <source>
        <strain>DSM 23117 / BGSC 10A6 / LMG 26770 / FZB42</strain>
    </source>
</reference>
<protein>
    <recommendedName>
        <fullName evidence="1">Large ribosomal subunit protein uL5</fullName>
    </recommendedName>
    <alternativeName>
        <fullName evidence="2">50S ribosomal protein L5</fullName>
    </alternativeName>
</protein>
<comment type="function">
    <text evidence="1">This is one of the proteins that bind and probably mediate the attachment of the 5S RNA into the large ribosomal subunit, where it forms part of the central protuberance. In the 70S ribosome it contacts protein S13 of the 30S subunit (bridge B1b), connecting the 2 subunits; this bridge is implicated in subunit movement. Contacts the P site tRNA; the 5S rRNA and some of its associated proteins might help stabilize positioning of ribosome-bound tRNAs.</text>
</comment>
<comment type="subunit">
    <text evidence="1">Part of the 50S ribosomal subunit; part of the 5S rRNA/L5/L18/L25 subcomplex. Contacts the 5S rRNA and the P site tRNA. Forms a bridge to the 30S subunit in the 70S ribosome.</text>
</comment>
<comment type="similarity">
    <text evidence="1">Belongs to the universal ribosomal protein uL5 family.</text>
</comment>
<evidence type="ECO:0000255" key="1">
    <source>
        <dbReference type="HAMAP-Rule" id="MF_01333"/>
    </source>
</evidence>
<evidence type="ECO:0000305" key="2"/>
<dbReference type="EMBL" id="CP000560">
    <property type="protein sequence ID" value="ABS72576.1"/>
    <property type="molecule type" value="Genomic_DNA"/>
</dbReference>
<dbReference type="RefSeq" id="WP_003156487.1">
    <property type="nucleotide sequence ID" value="NC_009725.2"/>
</dbReference>
<dbReference type="SMR" id="A7Z0Q0"/>
<dbReference type="GeneID" id="93079292"/>
<dbReference type="KEGG" id="bay:RBAM_001530"/>
<dbReference type="HOGENOM" id="CLU_061015_2_1_9"/>
<dbReference type="Proteomes" id="UP000001120">
    <property type="component" value="Chromosome"/>
</dbReference>
<dbReference type="GO" id="GO:1990904">
    <property type="term" value="C:ribonucleoprotein complex"/>
    <property type="evidence" value="ECO:0007669"/>
    <property type="project" value="UniProtKB-KW"/>
</dbReference>
<dbReference type="GO" id="GO:0005840">
    <property type="term" value="C:ribosome"/>
    <property type="evidence" value="ECO:0007669"/>
    <property type="project" value="UniProtKB-KW"/>
</dbReference>
<dbReference type="GO" id="GO:0019843">
    <property type="term" value="F:rRNA binding"/>
    <property type="evidence" value="ECO:0007669"/>
    <property type="project" value="UniProtKB-UniRule"/>
</dbReference>
<dbReference type="GO" id="GO:0003735">
    <property type="term" value="F:structural constituent of ribosome"/>
    <property type="evidence" value="ECO:0007669"/>
    <property type="project" value="InterPro"/>
</dbReference>
<dbReference type="GO" id="GO:0000049">
    <property type="term" value="F:tRNA binding"/>
    <property type="evidence" value="ECO:0007669"/>
    <property type="project" value="UniProtKB-UniRule"/>
</dbReference>
<dbReference type="GO" id="GO:0006412">
    <property type="term" value="P:translation"/>
    <property type="evidence" value="ECO:0007669"/>
    <property type="project" value="UniProtKB-UniRule"/>
</dbReference>
<dbReference type="FunFam" id="3.30.1440.10:FF:000001">
    <property type="entry name" value="50S ribosomal protein L5"/>
    <property type="match status" value="1"/>
</dbReference>
<dbReference type="Gene3D" id="3.30.1440.10">
    <property type="match status" value="1"/>
</dbReference>
<dbReference type="HAMAP" id="MF_01333_B">
    <property type="entry name" value="Ribosomal_uL5_B"/>
    <property type="match status" value="1"/>
</dbReference>
<dbReference type="InterPro" id="IPR002132">
    <property type="entry name" value="Ribosomal_uL5"/>
</dbReference>
<dbReference type="InterPro" id="IPR020930">
    <property type="entry name" value="Ribosomal_uL5_bac-type"/>
</dbReference>
<dbReference type="InterPro" id="IPR031309">
    <property type="entry name" value="Ribosomal_uL5_C"/>
</dbReference>
<dbReference type="InterPro" id="IPR020929">
    <property type="entry name" value="Ribosomal_uL5_CS"/>
</dbReference>
<dbReference type="InterPro" id="IPR022803">
    <property type="entry name" value="Ribosomal_uL5_dom_sf"/>
</dbReference>
<dbReference type="InterPro" id="IPR031310">
    <property type="entry name" value="Ribosomal_uL5_N"/>
</dbReference>
<dbReference type="NCBIfam" id="NF000585">
    <property type="entry name" value="PRK00010.1"/>
    <property type="match status" value="1"/>
</dbReference>
<dbReference type="PANTHER" id="PTHR11994">
    <property type="entry name" value="60S RIBOSOMAL PROTEIN L11-RELATED"/>
    <property type="match status" value="1"/>
</dbReference>
<dbReference type="Pfam" id="PF00281">
    <property type="entry name" value="Ribosomal_L5"/>
    <property type="match status" value="1"/>
</dbReference>
<dbReference type="Pfam" id="PF00673">
    <property type="entry name" value="Ribosomal_L5_C"/>
    <property type="match status" value="1"/>
</dbReference>
<dbReference type="PIRSF" id="PIRSF002161">
    <property type="entry name" value="Ribosomal_L5"/>
    <property type="match status" value="1"/>
</dbReference>
<dbReference type="SUPFAM" id="SSF55282">
    <property type="entry name" value="RL5-like"/>
    <property type="match status" value="1"/>
</dbReference>
<dbReference type="PROSITE" id="PS00358">
    <property type="entry name" value="RIBOSOMAL_L5"/>
    <property type="match status" value="1"/>
</dbReference>
<accession>A7Z0Q0</accession>
<sequence>MNRLKEKYNKEISPALMTKFNYDSVMQVPKIEKIVINMGVGDAVQNAKAIDSAVEELTFIAGQKPVVTRAKKSIAGFRLREGMPIGAKVTLRGERMYDFLDKLISVSLPRVRDFRGISKKSFDGRGNYTLGIKEQLIFPEIDYDKVTKVRGMDIVIVTTANSDEEARELLTQVGMPFQK</sequence>
<keyword id="KW-0687">Ribonucleoprotein</keyword>
<keyword id="KW-0689">Ribosomal protein</keyword>
<keyword id="KW-0694">RNA-binding</keyword>
<keyword id="KW-0699">rRNA-binding</keyword>
<keyword id="KW-0820">tRNA-binding</keyword>
<name>RL5_BACVZ</name>
<feature type="chain" id="PRO_1000052690" description="Large ribosomal subunit protein uL5">
    <location>
        <begin position="1"/>
        <end position="179"/>
    </location>
</feature>